<organism>
    <name type="scientific">Nostoc sp. (strain PCC 7120 / SAG 25.82 / UTEX 2576)</name>
    <dbReference type="NCBI Taxonomy" id="103690"/>
    <lineage>
        <taxon>Bacteria</taxon>
        <taxon>Bacillati</taxon>
        <taxon>Cyanobacteriota</taxon>
        <taxon>Cyanophyceae</taxon>
        <taxon>Nostocales</taxon>
        <taxon>Nostocaceae</taxon>
        <taxon>Nostoc</taxon>
    </lineage>
</organism>
<accession>Q8YQ44</accession>
<protein>
    <recommendedName>
        <fullName evidence="1">Photosystem II reaction center protein Z</fullName>
        <shortName evidence="1">PSII-Z</shortName>
    </recommendedName>
</protein>
<dbReference type="EMBL" id="BA000019">
    <property type="protein sequence ID" value="BAB75691.1"/>
    <property type="molecule type" value="Genomic_DNA"/>
</dbReference>
<dbReference type="PIR" id="AI2304">
    <property type="entry name" value="AI2304"/>
</dbReference>
<dbReference type="RefSeq" id="WP_010998132.1">
    <property type="nucleotide sequence ID" value="NZ_RSCN01000023.1"/>
</dbReference>
<dbReference type="SMR" id="Q8YQ44"/>
<dbReference type="STRING" id="103690.gene:10496034"/>
<dbReference type="KEGG" id="ana:asr3992"/>
<dbReference type="eggNOG" id="ENOG5032ZB0">
    <property type="taxonomic scope" value="Bacteria"/>
</dbReference>
<dbReference type="Proteomes" id="UP000002483">
    <property type="component" value="Chromosome"/>
</dbReference>
<dbReference type="GO" id="GO:0009539">
    <property type="term" value="C:photosystem II reaction center"/>
    <property type="evidence" value="ECO:0007669"/>
    <property type="project" value="InterPro"/>
</dbReference>
<dbReference type="GO" id="GO:0031676">
    <property type="term" value="C:plasma membrane-derived thylakoid membrane"/>
    <property type="evidence" value="ECO:0007669"/>
    <property type="project" value="UniProtKB-SubCell"/>
</dbReference>
<dbReference type="GO" id="GO:0015979">
    <property type="term" value="P:photosynthesis"/>
    <property type="evidence" value="ECO:0007669"/>
    <property type="project" value="UniProtKB-UniRule"/>
</dbReference>
<dbReference type="GO" id="GO:0042549">
    <property type="term" value="P:photosystem II stabilization"/>
    <property type="evidence" value="ECO:0007669"/>
    <property type="project" value="InterPro"/>
</dbReference>
<dbReference type="Gene3D" id="1.10.287.740">
    <property type="entry name" value="Photosystem II PsbZ, reaction centre"/>
    <property type="match status" value="1"/>
</dbReference>
<dbReference type="HAMAP" id="MF_00644">
    <property type="entry name" value="PSII_PsbZ"/>
    <property type="match status" value="1"/>
</dbReference>
<dbReference type="InterPro" id="IPR002644">
    <property type="entry name" value="PSII_PsbZ"/>
</dbReference>
<dbReference type="InterPro" id="IPR036512">
    <property type="entry name" value="PSII_PsbZ_sf"/>
</dbReference>
<dbReference type="NCBIfam" id="TIGR03043">
    <property type="entry name" value="PS_II_psbZ"/>
    <property type="match status" value="1"/>
</dbReference>
<dbReference type="PANTHER" id="PTHR34971">
    <property type="entry name" value="PHOTOSYSTEM II REACTION CENTER PROTEIN Z"/>
    <property type="match status" value="1"/>
</dbReference>
<dbReference type="PANTHER" id="PTHR34971:SF2">
    <property type="entry name" value="PHOTOSYSTEM II REACTION CENTER PROTEIN Z"/>
    <property type="match status" value="1"/>
</dbReference>
<dbReference type="Pfam" id="PF01737">
    <property type="entry name" value="Ycf9"/>
    <property type="match status" value="1"/>
</dbReference>
<dbReference type="SUPFAM" id="SSF161055">
    <property type="entry name" value="PsbZ-like"/>
    <property type="match status" value="1"/>
</dbReference>
<gene>
    <name evidence="1" type="primary">psbZ</name>
    <name type="ordered locus">asr3992</name>
</gene>
<evidence type="ECO:0000255" key="1">
    <source>
        <dbReference type="HAMAP-Rule" id="MF_00644"/>
    </source>
</evidence>
<name>PSBZ_NOSS1</name>
<sequence>MTIIFQFALVALVLVSFVLVVGVPVAYATPQNWVESKKLLWLGSGVWIALVLLVGLLNFFVV</sequence>
<feature type="chain" id="PRO_0000217732" description="Photosystem II reaction center protein Z">
    <location>
        <begin position="1"/>
        <end position="62"/>
    </location>
</feature>
<feature type="transmembrane region" description="Helical" evidence="1">
    <location>
        <begin position="8"/>
        <end position="28"/>
    </location>
</feature>
<feature type="transmembrane region" description="Helical" evidence="1">
    <location>
        <begin position="41"/>
        <end position="61"/>
    </location>
</feature>
<comment type="function">
    <text evidence="1">May control the interaction of photosystem II (PSII) cores with the light-harvesting antenna, regulates electron flow through the 2 photosystem reaction centers. PSII is a light-driven water plastoquinone oxidoreductase, using light energy to abstract electrons from H(2)O, generating a proton gradient subsequently used for ATP formation.</text>
</comment>
<comment type="subunit">
    <text evidence="1">PSII is composed of 1 copy each of membrane proteins PsbA, PsbB, PsbC, PsbD, PsbE, PsbF, PsbH, PsbI, PsbJ, PsbK, PsbL, PsbM, PsbT, PsbX, PsbY, PsbZ, Psb30/Ycf12, peripheral proteins PsbO, CyanoQ (PsbQ), PsbU, PsbV and a large number of cofactors. It forms dimeric complexes.</text>
</comment>
<comment type="subcellular location">
    <subcellularLocation>
        <location evidence="1">Cellular thylakoid membrane</location>
        <topology evidence="1">Multi-pass membrane protein</topology>
    </subcellularLocation>
</comment>
<comment type="similarity">
    <text evidence="1">Belongs to the PsbZ family.</text>
</comment>
<keyword id="KW-0472">Membrane</keyword>
<keyword id="KW-0602">Photosynthesis</keyword>
<keyword id="KW-0604">Photosystem II</keyword>
<keyword id="KW-0674">Reaction center</keyword>
<keyword id="KW-1185">Reference proteome</keyword>
<keyword id="KW-0793">Thylakoid</keyword>
<keyword id="KW-0812">Transmembrane</keyword>
<keyword id="KW-1133">Transmembrane helix</keyword>
<reference key="1">
    <citation type="journal article" date="2001" name="DNA Res.">
        <title>Complete genomic sequence of the filamentous nitrogen-fixing cyanobacterium Anabaena sp. strain PCC 7120.</title>
        <authorList>
            <person name="Kaneko T."/>
            <person name="Nakamura Y."/>
            <person name="Wolk C.P."/>
            <person name="Kuritz T."/>
            <person name="Sasamoto S."/>
            <person name="Watanabe A."/>
            <person name="Iriguchi M."/>
            <person name="Ishikawa A."/>
            <person name="Kawashima K."/>
            <person name="Kimura T."/>
            <person name="Kishida Y."/>
            <person name="Kohara M."/>
            <person name="Matsumoto M."/>
            <person name="Matsuno A."/>
            <person name="Muraki A."/>
            <person name="Nakazaki N."/>
            <person name="Shimpo S."/>
            <person name="Sugimoto M."/>
            <person name="Takazawa M."/>
            <person name="Yamada M."/>
            <person name="Yasuda M."/>
            <person name="Tabata S."/>
        </authorList>
    </citation>
    <scope>NUCLEOTIDE SEQUENCE [LARGE SCALE GENOMIC DNA]</scope>
    <source>
        <strain>PCC 7120 / SAG 25.82 / UTEX 2576</strain>
    </source>
</reference>
<proteinExistence type="inferred from homology"/>